<organism>
    <name type="scientific">Homo sapiens</name>
    <name type="common">Human</name>
    <dbReference type="NCBI Taxonomy" id="9606"/>
    <lineage>
        <taxon>Eukaryota</taxon>
        <taxon>Metazoa</taxon>
        <taxon>Chordata</taxon>
        <taxon>Craniata</taxon>
        <taxon>Vertebrata</taxon>
        <taxon>Euteleostomi</taxon>
        <taxon>Mammalia</taxon>
        <taxon>Eutheria</taxon>
        <taxon>Euarchontoglires</taxon>
        <taxon>Primates</taxon>
        <taxon>Haplorrhini</taxon>
        <taxon>Catarrhini</taxon>
        <taxon>Hominidae</taxon>
        <taxon>Homo</taxon>
    </lineage>
</organism>
<comment type="function">
    <text evidence="10">Catalytic component of P4-ATPase flippase complex, which catalyzes the hydrolysis of ATP coupled to the transport of phosphatidylcholine (PC) from the outer to the inner leaflet of the plasma membrane. May contribute to the maintenance of membrane lipid asymmetry.</text>
</comment>
<comment type="catalytic activity">
    <reaction evidence="10">
        <text>ATP + H2O + phospholipidSide 1 = ADP + phosphate + phospholipidSide 2.</text>
        <dbReference type="EC" id="7.6.2.1"/>
    </reaction>
</comment>
<comment type="catalytic activity">
    <reaction evidence="10">
        <text>a 1,2-diacyl-sn-glycero-3-phosphocholine(out) + ATP + H2O = a 1,2-diacyl-sn-glycero-3-phosphocholine(in) + ADP + phosphate + H(+)</text>
        <dbReference type="Rhea" id="RHEA:38583"/>
        <dbReference type="ChEBI" id="CHEBI:15377"/>
        <dbReference type="ChEBI" id="CHEBI:15378"/>
        <dbReference type="ChEBI" id="CHEBI:30616"/>
        <dbReference type="ChEBI" id="CHEBI:43474"/>
        <dbReference type="ChEBI" id="CHEBI:57643"/>
        <dbReference type="ChEBI" id="CHEBI:456216"/>
    </reaction>
    <physiologicalReaction direction="left-to-right" evidence="15">
        <dbReference type="Rhea" id="RHEA:38584"/>
    </physiologicalReaction>
</comment>
<comment type="cofactor">
    <cofactor evidence="4">
        <name>Mg(2+)</name>
        <dbReference type="ChEBI" id="CHEBI:18420"/>
    </cofactor>
</comment>
<comment type="subunit">
    <text evidence="9">Component of a P4-ATPase flippase complex which consists of a catalytic alpha subunit ATP8B2 and an accessory beta subunit TMEM30A or TMEM30B.</text>
</comment>
<comment type="interaction">
    <interactant intactId="EBI-9539266">
        <id>P98198</id>
    </interactant>
    <interactant intactId="EBI-2836942">
        <id>Q9NV96</id>
        <label>TMEM30A</label>
    </interactant>
    <organismsDiffer>false</organismsDiffer>
    <experiments>4</experiments>
</comment>
<comment type="interaction">
    <interactant intactId="EBI-9539266">
        <id>P98198</id>
    </interactant>
    <interactant intactId="EBI-9527107">
        <id>Q3MIR4</id>
        <label>TMEM30B</label>
    </interactant>
    <organismsDiffer>false</organismsDiffer>
    <experiments>3</experiments>
</comment>
<comment type="subcellular location">
    <subcellularLocation>
        <location evidence="8 9 10">Cell membrane</location>
        <topology evidence="5">Multi-pass membrane protein</topology>
    </subcellularLocation>
    <subcellularLocation>
        <location evidence="9">Endoplasmic reticulum membrane</location>
        <topology evidence="5">Multi-pass membrane protein</topology>
    </subcellularLocation>
    <text evidence="9 10">Efficient exit from the endoplasmic reticulum requires the presence of TMEM30A or TMEM30B.</text>
</comment>
<comment type="alternative products">
    <event type="alternative splicing"/>
    <isoform>
        <id>P98198-1</id>
        <name>1</name>
        <sequence type="displayed"/>
    </isoform>
    <isoform>
        <id>P98198-2</id>
        <name>2</name>
        <sequence type="described" ref="VSP_007302 VSP_007303"/>
    </isoform>
    <isoform>
        <id>P98198-3</id>
        <name>3</name>
        <sequence type="described" ref="VSP_037147"/>
    </isoform>
    <isoform>
        <id>P98198-4</id>
        <name>4</name>
        <sequence type="described" ref="VSP_037148 VSP_037149 VSP_037150"/>
    </isoform>
    <isoform>
        <id>P98198-5</id>
        <name>5</name>
        <sequence type="described" ref="VSP_037148"/>
    </isoform>
</comment>
<comment type="tissue specificity">
    <text evidence="7">Isoform 3 is ubiquitous, with highest expression in aorta, cerebellum and uterus.</text>
</comment>
<comment type="similarity">
    <text evidence="14">Belongs to the cation transport ATPase (P-type) (TC 3.A.3) family. Type IV subfamily.</text>
</comment>
<comment type="sequence caution" evidence="14">
    <conflict type="erroneous initiation">
        <sequence resource="EMBL-CDS" id="AAH30288"/>
    </conflict>
    <text>Extended N-terminus.</text>
</comment>
<comment type="sequence caution" evidence="14">
    <conflict type="frameshift">
        <sequence resource="EMBL-CDS" id="BAB70822"/>
    </conflict>
</comment>
<comment type="sequence caution" evidence="14">
    <conflict type="erroneous initiation">
        <sequence resource="EMBL-CDS" id="BAG65556"/>
    </conflict>
    <text>Truncated N-terminus.</text>
</comment>
<feature type="chain" id="PRO_0000046365" description="Phospholipid-transporting ATPase ID">
    <location>
        <begin position="1"/>
        <end position="1209"/>
    </location>
</feature>
<feature type="topological domain" description="Cytoplasmic" evidence="5">
    <location>
        <begin position="1"/>
        <end position="64"/>
    </location>
</feature>
<feature type="transmembrane region" description="Helical" evidence="5">
    <location>
        <begin position="65"/>
        <end position="86"/>
    </location>
</feature>
<feature type="topological domain" description="Exoplasmic loop" evidence="5">
    <location>
        <begin position="87"/>
        <end position="92"/>
    </location>
</feature>
<feature type="transmembrane region" description="Helical" evidence="5">
    <location>
        <begin position="93"/>
        <end position="112"/>
    </location>
</feature>
<feature type="topological domain" description="Cytoplasmic" evidence="5">
    <location>
        <begin position="113"/>
        <end position="295"/>
    </location>
</feature>
<feature type="transmembrane region" description="Helical" evidence="5">
    <location>
        <begin position="296"/>
        <end position="317"/>
    </location>
</feature>
<feature type="topological domain" description="Exoplasmic loop" evidence="5">
    <location>
        <begin position="318"/>
        <end position="346"/>
    </location>
</feature>
<feature type="transmembrane region" description="Helical" evidence="5">
    <location>
        <begin position="347"/>
        <end position="368"/>
    </location>
</feature>
<feature type="topological domain" description="Cytoplasmic" evidence="5">
    <location>
        <begin position="369"/>
        <end position="889"/>
    </location>
</feature>
<feature type="transmembrane region" description="Helical" evidence="5">
    <location>
        <begin position="890"/>
        <end position="910"/>
    </location>
</feature>
<feature type="topological domain" description="Exoplasmic loop" evidence="5">
    <location>
        <begin position="911"/>
        <end position="922"/>
    </location>
</feature>
<feature type="transmembrane region" description="Helical" evidence="5">
    <location>
        <begin position="923"/>
        <end position="942"/>
    </location>
</feature>
<feature type="topological domain" description="Cytoplasmic" evidence="5">
    <location>
        <begin position="943"/>
        <end position="972"/>
    </location>
</feature>
<feature type="transmembrane region" description="Helical" evidence="5">
    <location>
        <begin position="973"/>
        <end position="994"/>
    </location>
</feature>
<feature type="topological domain" description="Exoplasmic loop" evidence="5">
    <location>
        <begin position="995"/>
        <end position="1008"/>
    </location>
</feature>
<feature type="transmembrane region" description="Helical" evidence="5">
    <location>
        <begin position="1009"/>
        <end position="1031"/>
    </location>
</feature>
<feature type="topological domain" description="Cytoplasmic" evidence="5">
    <location>
        <begin position="1032"/>
        <end position="1037"/>
    </location>
</feature>
<feature type="transmembrane region" description="Helical" evidence="5">
    <location>
        <begin position="1038"/>
        <end position="1058"/>
    </location>
</feature>
<feature type="topological domain" description="Exoplasmic loop" evidence="5">
    <location>
        <begin position="1059"/>
        <end position="1078"/>
    </location>
</feature>
<feature type="transmembrane region" description="Helical" evidence="5">
    <location>
        <begin position="1079"/>
        <end position="1103"/>
    </location>
</feature>
<feature type="topological domain" description="Cytoplasmic" evidence="5">
    <location>
        <begin position="1104"/>
        <end position="1209"/>
    </location>
</feature>
<feature type="region of interest" description="Disordered" evidence="6">
    <location>
        <begin position="1"/>
        <end position="36"/>
    </location>
</feature>
<feature type="region of interest" description="Disordered" evidence="6">
    <location>
        <begin position="1181"/>
        <end position="1209"/>
    </location>
</feature>
<feature type="compositionally biased region" description="Basic and acidic residues" evidence="6">
    <location>
        <begin position="1"/>
        <end position="12"/>
    </location>
</feature>
<feature type="compositionally biased region" description="Low complexity" evidence="6">
    <location>
        <begin position="1195"/>
        <end position="1209"/>
    </location>
</feature>
<feature type="active site" description="4-aspartylphosphate intermediate" evidence="3">
    <location>
        <position position="411"/>
    </location>
</feature>
<feature type="binding site" evidence="4">
    <location>
        <position position="411"/>
    </location>
    <ligand>
        <name>ATP</name>
        <dbReference type="ChEBI" id="CHEBI:30616"/>
    </ligand>
</feature>
<feature type="binding site" evidence="4">
    <location>
        <position position="411"/>
    </location>
    <ligand>
        <name>Mg(2+)</name>
        <dbReference type="ChEBI" id="CHEBI:18420"/>
    </ligand>
</feature>
<feature type="binding site" evidence="4">
    <location>
        <position position="412"/>
    </location>
    <ligand>
        <name>ATP</name>
        <dbReference type="ChEBI" id="CHEBI:30616"/>
    </ligand>
</feature>
<feature type="binding site" evidence="4">
    <location>
        <position position="413"/>
    </location>
    <ligand>
        <name>ATP</name>
        <dbReference type="ChEBI" id="CHEBI:30616"/>
    </ligand>
</feature>
<feature type="binding site" evidence="4">
    <location>
        <position position="413"/>
    </location>
    <ligand>
        <name>Mg(2+)</name>
        <dbReference type="ChEBI" id="CHEBI:18420"/>
    </ligand>
</feature>
<feature type="binding site" evidence="1">
    <location>
        <position position="515"/>
    </location>
    <ligand>
        <name>ATP</name>
        <dbReference type="ChEBI" id="CHEBI:30616"/>
    </ligand>
</feature>
<feature type="binding site" evidence="4">
    <location>
        <position position="556"/>
    </location>
    <ligand>
        <name>ATP</name>
        <dbReference type="ChEBI" id="CHEBI:30616"/>
    </ligand>
</feature>
<feature type="binding site" evidence="1">
    <location>
        <position position="579"/>
    </location>
    <ligand>
        <name>ATP</name>
        <dbReference type="ChEBI" id="CHEBI:30616"/>
    </ligand>
</feature>
<feature type="binding site" evidence="1">
    <location>
        <position position="613"/>
    </location>
    <ligand>
        <name>ATP</name>
        <dbReference type="ChEBI" id="CHEBI:30616"/>
    </ligand>
</feature>
<feature type="binding site" evidence="1">
    <location>
        <position position="693"/>
    </location>
    <ligand>
        <name>ATP</name>
        <dbReference type="ChEBI" id="CHEBI:30616"/>
    </ligand>
</feature>
<feature type="binding site" evidence="1">
    <location>
        <position position="694"/>
    </location>
    <ligand>
        <name>ATP</name>
        <dbReference type="ChEBI" id="CHEBI:30616"/>
    </ligand>
</feature>
<feature type="binding site" evidence="1">
    <location>
        <position position="695"/>
    </location>
    <ligand>
        <name>ATP</name>
        <dbReference type="ChEBI" id="CHEBI:30616"/>
    </ligand>
</feature>
<feature type="binding site" evidence="1">
    <location>
        <position position="807"/>
    </location>
    <ligand>
        <name>ATP</name>
        <dbReference type="ChEBI" id="CHEBI:30616"/>
    </ligand>
</feature>
<feature type="binding site" evidence="1">
    <location>
        <position position="813"/>
    </location>
    <ligand>
        <name>ATP</name>
        <dbReference type="ChEBI" id="CHEBI:30616"/>
    </ligand>
</feature>
<feature type="binding site" evidence="2">
    <location>
        <position position="833"/>
    </location>
    <ligand>
        <name>Mg(2+)</name>
        <dbReference type="ChEBI" id="CHEBI:18420"/>
    </ligand>
</feature>
<feature type="binding site" evidence="4">
    <location>
        <position position="836"/>
    </location>
    <ligand>
        <name>ATP</name>
        <dbReference type="ChEBI" id="CHEBI:30616"/>
    </ligand>
</feature>
<feature type="binding site" evidence="4">
    <location>
        <position position="837"/>
    </location>
    <ligand>
        <name>ATP</name>
        <dbReference type="ChEBI" id="CHEBI:30616"/>
    </ligand>
</feature>
<feature type="binding site" evidence="2">
    <location>
        <position position="837"/>
    </location>
    <ligand>
        <name>Mg(2+)</name>
        <dbReference type="ChEBI" id="CHEBI:18420"/>
    </ligand>
</feature>
<feature type="modified residue" description="Phosphoserine" evidence="16">
    <location>
        <position position="1175"/>
    </location>
</feature>
<feature type="splice variant" id="VSP_037147" description="In isoform 3." evidence="11">
    <original>MTVPKEMPEKWARAQAPPSWSRKKPSWGT</original>
    <variation>MDTLRAVPLFSISGLFSFPYRVSHGIAGILLGEMAVCAKKRPP</variation>
    <location>
        <begin position="1"/>
        <end position="29"/>
    </location>
</feature>
<feature type="splice variant" id="VSP_037148" description="In isoform 4 and isoform 5." evidence="13">
    <original>MTVPKEMPEKWARAQAPPSWSRKKPSWGT</original>
    <variation>MAVCAKKRPP</variation>
    <location>
        <begin position="1"/>
        <end position="29"/>
    </location>
</feature>
<feature type="splice variant" id="VSP_037149" description="In isoform 4." evidence="13">
    <original>SVEVIRLGHSYFINWDKKMFCMKKRTPAEARTTTLNEELGQVE</original>
    <variation>RYVPSLTWGLSRESGGPIELFFSMKMKSLRSNEKSSSSCTVNI</variation>
    <location>
        <begin position="364"/>
        <end position="406"/>
    </location>
</feature>
<feature type="splice variant" id="VSP_037150" description="In isoform 4." evidence="13">
    <location>
        <begin position="407"/>
        <end position="1209"/>
    </location>
</feature>
<feature type="splice variant" id="VSP_007302" description="In isoform 2." evidence="12">
    <original>GDVFDVLGHKAELGERPEPVDFSFNPLA</original>
    <variation>VGSEGPRRKGPSWPGTVAHAYSHSTLGG</variation>
    <location>
        <begin position="434"/>
        <end position="461"/>
    </location>
</feature>
<feature type="splice variant" id="VSP_007303" description="In isoform 2." evidence="12">
    <location>
        <begin position="462"/>
        <end position="1209"/>
    </location>
</feature>
<feature type="mutagenesis site" description="Impairs ATPase flippase activity." evidence="10">
    <original>E</original>
    <variation>Q</variation>
    <location>
        <position position="204"/>
    </location>
</feature>
<feature type="mutagenesis site" description="Impairs ATPase activity." evidence="9">
    <original>D</original>
    <variation>N</variation>
    <location>
        <position position="411"/>
    </location>
</feature>
<feature type="sequence conflict" description="In Ref. 5; BAA86451." evidence="14" ref="5">
    <original>G</original>
    <variation>E</variation>
    <location>
        <position position="834"/>
    </location>
</feature>
<protein>
    <recommendedName>
        <fullName>Phospholipid-transporting ATPase ID</fullName>
        <ecNumber evidence="10">7.6.2.1</ecNumber>
    </recommendedName>
    <alternativeName>
        <fullName>ATPase class I type 8B member 2</fullName>
    </alternativeName>
    <alternativeName>
        <fullName>P4-ATPase flippase complex alpha subunit ATP8B2</fullName>
    </alternativeName>
</protein>
<dbReference type="EC" id="7.6.2.1" evidence="10"/>
<dbReference type="EMBL" id="AY302537">
    <property type="protein sequence ID" value="AAQ19027.1"/>
    <property type="molecule type" value="mRNA"/>
</dbReference>
<dbReference type="EMBL" id="AK054886">
    <property type="protein sequence ID" value="BAB70822.1"/>
    <property type="status" value="ALT_FRAME"/>
    <property type="molecule type" value="mRNA"/>
</dbReference>
<dbReference type="EMBL" id="AK304806">
    <property type="protein sequence ID" value="BAG65556.1"/>
    <property type="status" value="ALT_INIT"/>
    <property type="molecule type" value="mRNA"/>
</dbReference>
<dbReference type="EMBL" id="AL162591">
    <property type="status" value="NOT_ANNOTATED_CDS"/>
    <property type="molecule type" value="Genomic_DNA"/>
</dbReference>
<dbReference type="EMBL" id="CH471121">
    <property type="protein sequence ID" value="EAW53205.1"/>
    <property type="molecule type" value="Genomic_DNA"/>
</dbReference>
<dbReference type="EMBL" id="BC007837">
    <property type="protein sequence ID" value="AAH07837.2"/>
    <property type="molecule type" value="mRNA"/>
</dbReference>
<dbReference type="EMBL" id="BC030288">
    <property type="protein sequence ID" value="AAH30288.1"/>
    <property type="status" value="ALT_INIT"/>
    <property type="molecule type" value="mRNA"/>
</dbReference>
<dbReference type="EMBL" id="BC069264">
    <property type="protein sequence ID" value="AAH69264.1"/>
    <property type="molecule type" value="mRNA"/>
</dbReference>
<dbReference type="EMBL" id="AB032963">
    <property type="protein sequence ID" value="BAA86451.1"/>
    <property type="molecule type" value="mRNA"/>
</dbReference>
<dbReference type="EMBL" id="AL137537">
    <property type="protein sequence ID" value="CAB70799.1"/>
    <property type="molecule type" value="mRNA"/>
</dbReference>
<dbReference type="CCDS" id="CCDS1066.2">
    <molecule id="P98198-5"/>
</dbReference>
<dbReference type="CCDS" id="CCDS41405.1">
    <molecule id="P98198-4"/>
</dbReference>
<dbReference type="CCDS" id="CCDS91062.1">
    <molecule id="P98198-1"/>
</dbReference>
<dbReference type="PIR" id="T46381">
    <property type="entry name" value="T46381"/>
</dbReference>
<dbReference type="RefSeq" id="NP_001005855.1">
    <molecule id="P98198-4"/>
    <property type="nucleotide sequence ID" value="NM_001005855.2"/>
</dbReference>
<dbReference type="RefSeq" id="NP_001354863.1">
    <molecule id="P98198-1"/>
    <property type="nucleotide sequence ID" value="NM_001367934.1"/>
</dbReference>
<dbReference type="RefSeq" id="NP_001357526.1">
    <molecule id="P98198-5"/>
    <property type="nucleotide sequence ID" value="NM_001370597.1"/>
</dbReference>
<dbReference type="RefSeq" id="NP_001358938.1">
    <molecule id="P98198-5"/>
    <property type="nucleotide sequence ID" value="NM_001372009.1"/>
</dbReference>
<dbReference type="RefSeq" id="NP_065185.1">
    <property type="nucleotide sequence ID" value="NM_020452.3"/>
</dbReference>
<dbReference type="RefSeq" id="XP_005245412.1">
    <property type="nucleotide sequence ID" value="XM_005245355.2"/>
</dbReference>
<dbReference type="RefSeq" id="XP_005245413.1">
    <property type="nucleotide sequence ID" value="XM_005245356.3"/>
</dbReference>
<dbReference type="SMR" id="P98198"/>
<dbReference type="BioGRID" id="121445">
    <property type="interactions" value="42"/>
</dbReference>
<dbReference type="ComplexPortal" id="CPX-6302">
    <property type="entry name" value="ATP8B2-CDC50A P4-ATPase complex"/>
</dbReference>
<dbReference type="ComplexPortal" id="CPX-6303">
    <property type="entry name" value="ATP8B2-CDC50B P4-ATPase complex"/>
</dbReference>
<dbReference type="FunCoup" id="P98198">
    <property type="interactions" value="1542"/>
</dbReference>
<dbReference type="IntAct" id="P98198">
    <property type="interactions" value="39"/>
</dbReference>
<dbReference type="STRING" id="9606.ENSP00000500034"/>
<dbReference type="GlyGen" id="P98198">
    <property type="glycosylation" value="4 sites, 1 O-linked glycan (3 sites)"/>
</dbReference>
<dbReference type="iPTMnet" id="P98198"/>
<dbReference type="PhosphoSitePlus" id="P98198"/>
<dbReference type="SwissPalm" id="P98198"/>
<dbReference type="BioMuta" id="ATP8B2"/>
<dbReference type="DMDM" id="30316371"/>
<dbReference type="jPOST" id="P98198"/>
<dbReference type="MassIVE" id="P98198"/>
<dbReference type="PaxDb" id="9606-ENSP00000357475"/>
<dbReference type="PeptideAtlas" id="P98198"/>
<dbReference type="ProteomicsDB" id="57827">
    <molecule id="P98198-1"/>
</dbReference>
<dbReference type="ProteomicsDB" id="57828">
    <molecule id="P98198-2"/>
</dbReference>
<dbReference type="ProteomicsDB" id="57829">
    <molecule id="P98198-3"/>
</dbReference>
<dbReference type="ProteomicsDB" id="57830">
    <molecule id="P98198-4"/>
</dbReference>
<dbReference type="Antibodypedia" id="34152">
    <property type="antibodies" value="90 antibodies from 15 providers"/>
</dbReference>
<dbReference type="DNASU" id="57198"/>
<dbReference type="Ensembl" id="ENST00000368487.7">
    <molecule id="P98198-4"/>
    <property type="protein sequence ID" value="ENSP00000357472.3"/>
    <property type="gene ID" value="ENSG00000143515.20"/>
</dbReference>
<dbReference type="Ensembl" id="ENST00000368489.6">
    <molecule id="P98198-5"/>
    <property type="protein sequence ID" value="ENSP00000357475.4"/>
    <property type="gene ID" value="ENSG00000143515.20"/>
</dbReference>
<dbReference type="Ensembl" id="ENST00000672630.1">
    <molecule id="P98198-3"/>
    <property type="protein sequence ID" value="ENSP00000500034.1"/>
    <property type="gene ID" value="ENSG00000143515.20"/>
</dbReference>
<dbReference type="Ensembl" id="ENST00000696573.1">
    <molecule id="P98198-1"/>
    <property type="protein sequence ID" value="ENSP00000512728.1"/>
    <property type="gene ID" value="ENSG00000143515.20"/>
</dbReference>
<dbReference type="GeneID" id="57198"/>
<dbReference type="KEGG" id="hsa:57198"/>
<dbReference type="MANE-Select" id="ENST00000368489.6">
    <molecule id="P98198-5"/>
    <property type="protein sequence ID" value="ENSP00000357475.4"/>
    <property type="RefSeq nucleotide sequence ID" value="NM_001370597.1"/>
    <property type="RefSeq protein sequence ID" value="NP_001357526.1"/>
</dbReference>
<dbReference type="UCSC" id="uc001few.4">
    <molecule id="P98198-1"/>
    <property type="organism name" value="human"/>
</dbReference>
<dbReference type="AGR" id="HGNC:13534"/>
<dbReference type="CTD" id="57198"/>
<dbReference type="DisGeNET" id="57198"/>
<dbReference type="GeneCards" id="ATP8B2"/>
<dbReference type="HGNC" id="HGNC:13534">
    <property type="gene designation" value="ATP8B2"/>
</dbReference>
<dbReference type="HPA" id="ENSG00000143515">
    <property type="expression patterns" value="Low tissue specificity"/>
</dbReference>
<dbReference type="MIM" id="605867">
    <property type="type" value="gene"/>
</dbReference>
<dbReference type="neXtProt" id="NX_P98198"/>
<dbReference type="OpenTargets" id="ENSG00000143515"/>
<dbReference type="PharmGKB" id="PA25167"/>
<dbReference type="VEuPathDB" id="HostDB:ENSG00000143515"/>
<dbReference type="eggNOG" id="KOG0206">
    <property type="taxonomic scope" value="Eukaryota"/>
</dbReference>
<dbReference type="GeneTree" id="ENSGT00940000160804"/>
<dbReference type="HOGENOM" id="CLU_000846_8_4_1"/>
<dbReference type="InParanoid" id="P98198"/>
<dbReference type="OMA" id="FIGTMEW"/>
<dbReference type="OrthoDB" id="377733at2759"/>
<dbReference type="PAN-GO" id="P98198">
    <property type="GO annotations" value="5 GO annotations based on evolutionary models"/>
</dbReference>
<dbReference type="PhylomeDB" id="P98198"/>
<dbReference type="TreeFam" id="TF300654"/>
<dbReference type="BRENDA" id="7.6.2.1">
    <property type="organism ID" value="2681"/>
</dbReference>
<dbReference type="PathwayCommons" id="P98198"/>
<dbReference type="Reactome" id="R-HSA-936837">
    <property type="pathway name" value="Ion transport by P-type ATPases"/>
</dbReference>
<dbReference type="SignaLink" id="P98198"/>
<dbReference type="BioGRID-ORCS" id="57198">
    <property type="hits" value="15 hits in 1153 CRISPR screens"/>
</dbReference>
<dbReference type="ChiTaRS" id="ATP8B2">
    <property type="organism name" value="human"/>
</dbReference>
<dbReference type="GenomeRNAi" id="57198"/>
<dbReference type="Pharos" id="P98198">
    <property type="development level" value="Tbio"/>
</dbReference>
<dbReference type="PRO" id="PR:P98198"/>
<dbReference type="Proteomes" id="UP000005640">
    <property type="component" value="Chromosome 1"/>
</dbReference>
<dbReference type="RNAct" id="P98198">
    <property type="molecule type" value="protein"/>
</dbReference>
<dbReference type="Bgee" id="ENSG00000143515">
    <property type="expression patterns" value="Expressed in mucosa of stomach and 170 other cell types or tissues"/>
</dbReference>
<dbReference type="ExpressionAtlas" id="P98198">
    <property type="expression patterns" value="baseline and differential"/>
</dbReference>
<dbReference type="GO" id="GO:0005829">
    <property type="term" value="C:cytosol"/>
    <property type="evidence" value="ECO:0000314"/>
    <property type="project" value="HPA"/>
</dbReference>
<dbReference type="GO" id="GO:0005789">
    <property type="term" value="C:endoplasmic reticulum membrane"/>
    <property type="evidence" value="ECO:0007669"/>
    <property type="project" value="UniProtKB-SubCell"/>
</dbReference>
<dbReference type="GO" id="GO:0005794">
    <property type="term" value="C:Golgi apparatus"/>
    <property type="evidence" value="ECO:0000314"/>
    <property type="project" value="UniProtKB"/>
</dbReference>
<dbReference type="GO" id="GO:0005730">
    <property type="term" value="C:nucleolus"/>
    <property type="evidence" value="ECO:0000314"/>
    <property type="project" value="HPA"/>
</dbReference>
<dbReference type="GO" id="GO:1990531">
    <property type="term" value="C:phospholipid-translocating ATPase complex"/>
    <property type="evidence" value="ECO:0000353"/>
    <property type="project" value="ComplexPortal"/>
</dbReference>
<dbReference type="GO" id="GO:0005886">
    <property type="term" value="C:plasma membrane"/>
    <property type="evidence" value="ECO:0000314"/>
    <property type="project" value="HPA"/>
</dbReference>
<dbReference type="GO" id="GO:0005802">
    <property type="term" value="C:trans-Golgi network"/>
    <property type="evidence" value="ECO:0000318"/>
    <property type="project" value="GO_Central"/>
</dbReference>
<dbReference type="GO" id="GO:0005524">
    <property type="term" value="F:ATP binding"/>
    <property type="evidence" value="ECO:0007669"/>
    <property type="project" value="UniProtKB-KW"/>
</dbReference>
<dbReference type="GO" id="GO:0016887">
    <property type="term" value="F:ATP hydrolysis activity"/>
    <property type="evidence" value="ECO:0007669"/>
    <property type="project" value="InterPro"/>
</dbReference>
<dbReference type="GO" id="GO:0140326">
    <property type="term" value="F:ATPase-coupled intramembrane lipid transporter activity"/>
    <property type="evidence" value="ECO:0000318"/>
    <property type="project" value="GO_Central"/>
</dbReference>
<dbReference type="GO" id="GO:0000287">
    <property type="term" value="F:magnesium ion binding"/>
    <property type="evidence" value="ECO:0007669"/>
    <property type="project" value="InterPro"/>
</dbReference>
<dbReference type="GO" id="GO:0140345">
    <property type="term" value="F:phosphatidylcholine flippase activity"/>
    <property type="evidence" value="ECO:0000314"/>
    <property type="project" value="UniProtKB"/>
</dbReference>
<dbReference type="GO" id="GO:0090554">
    <property type="term" value="F:phosphatidylcholine floppase activity"/>
    <property type="evidence" value="ECO:0007669"/>
    <property type="project" value="RHEA"/>
</dbReference>
<dbReference type="GO" id="GO:0007030">
    <property type="term" value="P:Golgi organization"/>
    <property type="evidence" value="ECO:0000318"/>
    <property type="project" value="GO_Central"/>
</dbReference>
<dbReference type="GO" id="GO:0034220">
    <property type="term" value="P:monoatomic ion transmembrane transport"/>
    <property type="evidence" value="ECO:0000304"/>
    <property type="project" value="Reactome"/>
</dbReference>
<dbReference type="GO" id="GO:0045332">
    <property type="term" value="P:phospholipid translocation"/>
    <property type="evidence" value="ECO:0000318"/>
    <property type="project" value="GO_Central"/>
</dbReference>
<dbReference type="CDD" id="cd02073">
    <property type="entry name" value="P-type_ATPase_APLT_Dnf-like"/>
    <property type="match status" value="1"/>
</dbReference>
<dbReference type="FunFam" id="2.70.150.10:FF:000025">
    <property type="entry name" value="Phospholipid-transporting ATPase"/>
    <property type="match status" value="1"/>
</dbReference>
<dbReference type="FunFam" id="3.40.1110.10:FF:000188">
    <property type="entry name" value="Phospholipid-transporting ATPase"/>
    <property type="match status" value="1"/>
</dbReference>
<dbReference type="FunFam" id="3.40.50.1000:FF:000014">
    <property type="entry name" value="Phospholipid-transporting ATPase"/>
    <property type="match status" value="1"/>
</dbReference>
<dbReference type="FunFam" id="3.40.50.1000:FF:000001">
    <property type="entry name" value="Phospholipid-transporting ATPase IC"/>
    <property type="match status" value="1"/>
</dbReference>
<dbReference type="Gene3D" id="3.40.1110.10">
    <property type="entry name" value="Calcium-transporting ATPase, cytoplasmic domain N"/>
    <property type="match status" value="1"/>
</dbReference>
<dbReference type="Gene3D" id="2.70.150.10">
    <property type="entry name" value="Calcium-transporting ATPase, cytoplasmic transduction domain A"/>
    <property type="match status" value="1"/>
</dbReference>
<dbReference type="Gene3D" id="3.40.50.1000">
    <property type="entry name" value="HAD superfamily/HAD-like"/>
    <property type="match status" value="1"/>
</dbReference>
<dbReference type="InterPro" id="IPR023299">
    <property type="entry name" value="ATPase_P-typ_cyto_dom_N"/>
</dbReference>
<dbReference type="InterPro" id="IPR018303">
    <property type="entry name" value="ATPase_P-typ_P_site"/>
</dbReference>
<dbReference type="InterPro" id="IPR023298">
    <property type="entry name" value="ATPase_P-typ_TM_dom_sf"/>
</dbReference>
<dbReference type="InterPro" id="IPR008250">
    <property type="entry name" value="ATPase_P-typ_transduc_dom_A_sf"/>
</dbReference>
<dbReference type="InterPro" id="IPR036412">
    <property type="entry name" value="HAD-like_sf"/>
</dbReference>
<dbReference type="InterPro" id="IPR023214">
    <property type="entry name" value="HAD_sf"/>
</dbReference>
<dbReference type="InterPro" id="IPR006539">
    <property type="entry name" value="P-type_ATPase_IV"/>
</dbReference>
<dbReference type="InterPro" id="IPR032631">
    <property type="entry name" value="P-type_ATPase_N"/>
</dbReference>
<dbReference type="InterPro" id="IPR001757">
    <property type="entry name" value="P_typ_ATPase"/>
</dbReference>
<dbReference type="InterPro" id="IPR032630">
    <property type="entry name" value="P_typ_ATPase_c"/>
</dbReference>
<dbReference type="InterPro" id="IPR044492">
    <property type="entry name" value="P_typ_ATPase_HD_dom"/>
</dbReference>
<dbReference type="NCBIfam" id="TIGR01652">
    <property type="entry name" value="ATPase-Plipid"/>
    <property type="match status" value="1"/>
</dbReference>
<dbReference type="NCBIfam" id="TIGR01494">
    <property type="entry name" value="ATPase_P-type"/>
    <property type="match status" value="1"/>
</dbReference>
<dbReference type="PANTHER" id="PTHR24092:SF46">
    <property type="entry name" value="PHOSPHOLIPID-TRANSPORTING ATPASE ID"/>
    <property type="match status" value="1"/>
</dbReference>
<dbReference type="PANTHER" id="PTHR24092">
    <property type="entry name" value="PROBABLE PHOSPHOLIPID-TRANSPORTING ATPASE"/>
    <property type="match status" value="1"/>
</dbReference>
<dbReference type="Pfam" id="PF13246">
    <property type="entry name" value="Cation_ATPase"/>
    <property type="match status" value="1"/>
</dbReference>
<dbReference type="Pfam" id="PF16212">
    <property type="entry name" value="PhoLip_ATPase_C"/>
    <property type="match status" value="1"/>
</dbReference>
<dbReference type="Pfam" id="PF16209">
    <property type="entry name" value="PhoLip_ATPase_N"/>
    <property type="match status" value="1"/>
</dbReference>
<dbReference type="PRINTS" id="PR00119">
    <property type="entry name" value="CATATPASE"/>
</dbReference>
<dbReference type="SFLD" id="SFLDS00003">
    <property type="entry name" value="Haloacid_Dehalogenase"/>
    <property type="match status" value="1"/>
</dbReference>
<dbReference type="SFLD" id="SFLDF00027">
    <property type="entry name" value="p-type_atpase"/>
    <property type="match status" value="1"/>
</dbReference>
<dbReference type="SUPFAM" id="SSF81653">
    <property type="entry name" value="Calcium ATPase, transduction domain A"/>
    <property type="match status" value="1"/>
</dbReference>
<dbReference type="SUPFAM" id="SSF81665">
    <property type="entry name" value="Calcium ATPase, transmembrane domain M"/>
    <property type="match status" value="1"/>
</dbReference>
<dbReference type="SUPFAM" id="SSF56784">
    <property type="entry name" value="HAD-like"/>
    <property type="match status" value="1"/>
</dbReference>
<dbReference type="SUPFAM" id="SSF81660">
    <property type="entry name" value="Metal cation-transporting ATPase, ATP-binding domain N"/>
    <property type="match status" value="1"/>
</dbReference>
<dbReference type="PROSITE" id="PS00154">
    <property type="entry name" value="ATPASE_E1_E2"/>
    <property type="match status" value="1"/>
</dbReference>
<reference key="1">
    <citation type="journal article" date="2003" name="Biochim. Biophys. Acta">
        <title>FIC1, a P-type ATPase linked to cholestatic liver disease, has homologues (ATP8B2 and ATP8B3) expressed throughout the body.</title>
        <authorList>
            <person name="Harris M.J."/>
            <person name="Arias I.M."/>
        </authorList>
    </citation>
    <scope>NUCLEOTIDE SEQUENCE [MRNA] (ISOFORM 3)</scope>
    <scope>ALTERNATIVE SPLICING (ISOFORM 4)</scope>
    <scope>TISSUE SPECIFICITY</scope>
    <source>
        <tissue>Colon</tissue>
    </source>
</reference>
<reference key="2">
    <citation type="journal article" date="2004" name="Nat. Genet.">
        <title>Complete sequencing and characterization of 21,243 full-length human cDNAs.</title>
        <authorList>
            <person name="Ota T."/>
            <person name="Suzuki Y."/>
            <person name="Nishikawa T."/>
            <person name="Otsuki T."/>
            <person name="Sugiyama T."/>
            <person name="Irie R."/>
            <person name="Wakamatsu A."/>
            <person name="Hayashi K."/>
            <person name="Sato H."/>
            <person name="Nagai K."/>
            <person name="Kimura K."/>
            <person name="Makita H."/>
            <person name="Sekine M."/>
            <person name="Obayashi M."/>
            <person name="Nishi T."/>
            <person name="Shibahara T."/>
            <person name="Tanaka T."/>
            <person name="Ishii S."/>
            <person name="Yamamoto J."/>
            <person name="Saito K."/>
            <person name="Kawai Y."/>
            <person name="Isono Y."/>
            <person name="Nakamura Y."/>
            <person name="Nagahari K."/>
            <person name="Murakami K."/>
            <person name="Yasuda T."/>
            <person name="Iwayanagi T."/>
            <person name="Wagatsuma M."/>
            <person name="Shiratori A."/>
            <person name="Sudo H."/>
            <person name="Hosoiri T."/>
            <person name="Kaku Y."/>
            <person name="Kodaira H."/>
            <person name="Kondo H."/>
            <person name="Sugawara M."/>
            <person name="Takahashi M."/>
            <person name="Kanda K."/>
            <person name="Yokoi T."/>
            <person name="Furuya T."/>
            <person name="Kikkawa E."/>
            <person name="Omura Y."/>
            <person name="Abe K."/>
            <person name="Kamihara K."/>
            <person name="Katsuta N."/>
            <person name="Sato K."/>
            <person name="Tanikawa M."/>
            <person name="Yamazaki M."/>
            <person name="Ninomiya K."/>
            <person name="Ishibashi T."/>
            <person name="Yamashita H."/>
            <person name="Murakawa K."/>
            <person name="Fujimori K."/>
            <person name="Tanai H."/>
            <person name="Kimata M."/>
            <person name="Watanabe M."/>
            <person name="Hiraoka S."/>
            <person name="Chiba Y."/>
            <person name="Ishida S."/>
            <person name="Ono Y."/>
            <person name="Takiguchi S."/>
            <person name="Watanabe S."/>
            <person name="Yosida M."/>
            <person name="Hotuta T."/>
            <person name="Kusano J."/>
            <person name="Kanehori K."/>
            <person name="Takahashi-Fujii A."/>
            <person name="Hara H."/>
            <person name="Tanase T.-O."/>
            <person name="Nomura Y."/>
            <person name="Togiya S."/>
            <person name="Komai F."/>
            <person name="Hara R."/>
            <person name="Takeuchi K."/>
            <person name="Arita M."/>
            <person name="Imose N."/>
            <person name="Musashino K."/>
            <person name="Yuuki H."/>
            <person name="Oshima A."/>
            <person name="Sasaki N."/>
            <person name="Aotsuka S."/>
            <person name="Yoshikawa Y."/>
            <person name="Matsunawa H."/>
            <person name="Ichihara T."/>
            <person name="Shiohata N."/>
            <person name="Sano S."/>
            <person name="Moriya S."/>
            <person name="Momiyama H."/>
            <person name="Satoh N."/>
            <person name="Takami S."/>
            <person name="Terashima Y."/>
            <person name="Suzuki O."/>
            <person name="Nakagawa S."/>
            <person name="Senoh A."/>
            <person name="Mizoguchi H."/>
            <person name="Goto Y."/>
            <person name="Shimizu F."/>
            <person name="Wakebe H."/>
            <person name="Hishigaki H."/>
            <person name="Watanabe T."/>
            <person name="Sugiyama A."/>
            <person name="Takemoto M."/>
            <person name="Kawakami B."/>
            <person name="Yamazaki M."/>
            <person name="Watanabe K."/>
            <person name="Kumagai A."/>
            <person name="Itakura S."/>
            <person name="Fukuzumi Y."/>
            <person name="Fujimori Y."/>
            <person name="Komiyama M."/>
            <person name="Tashiro H."/>
            <person name="Tanigami A."/>
            <person name="Fujiwara T."/>
            <person name="Ono T."/>
            <person name="Yamada K."/>
            <person name="Fujii Y."/>
            <person name="Ozaki K."/>
            <person name="Hirao M."/>
            <person name="Ohmori Y."/>
            <person name="Kawabata A."/>
            <person name="Hikiji T."/>
            <person name="Kobatake N."/>
            <person name="Inagaki H."/>
            <person name="Ikema Y."/>
            <person name="Okamoto S."/>
            <person name="Okitani R."/>
            <person name="Kawakami T."/>
            <person name="Noguchi S."/>
            <person name="Itoh T."/>
            <person name="Shigeta K."/>
            <person name="Senba T."/>
            <person name="Matsumura K."/>
            <person name="Nakajima Y."/>
            <person name="Mizuno T."/>
            <person name="Morinaga M."/>
            <person name="Sasaki M."/>
            <person name="Togashi T."/>
            <person name="Oyama M."/>
            <person name="Hata H."/>
            <person name="Watanabe M."/>
            <person name="Komatsu T."/>
            <person name="Mizushima-Sugano J."/>
            <person name="Satoh T."/>
            <person name="Shirai Y."/>
            <person name="Takahashi Y."/>
            <person name="Nakagawa K."/>
            <person name="Okumura K."/>
            <person name="Nagase T."/>
            <person name="Nomura N."/>
            <person name="Kikuchi H."/>
            <person name="Masuho Y."/>
            <person name="Yamashita R."/>
            <person name="Nakai K."/>
            <person name="Yada T."/>
            <person name="Nakamura Y."/>
            <person name="Ohara O."/>
            <person name="Isogai T."/>
            <person name="Sugano S."/>
        </authorList>
    </citation>
    <scope>NUCLEOTIDE SEQUENCE [LARGE SCALE MRNA] (ISOFORM 2)</scope>
    <scope>NUCLEOTIDE SEQUENCE [LARGE SCALE MRNA] OF 671-1209 (ISOFORMS 1/3)</scope>
    <source>
        <tissue>Cerebellum</tissue>
        <tissue>Uterus</tissue>
    </source>
</reference>
<reference key="3">
    <citation type="journal article" date="2006" name="Nature">
        <title>The DNA sequence and biological annotation of human chromosome 1.</title>
        <authorList>
            <person name="Gregory S.G."/>
            <person name="Barlow K.F."/>
            <person name="McLay K.E."/>
            <person name="Kaul R."/>
            <person name="Swarbreck D."/>
            <person name="Dunham A."/>
            <person name="Scott C.E."/>
            <person name="Howe K.L."/>
            <person name="Woodfine K."/>
            <person name="Spencer C.C.A."/>
            <person name="Jones M.C."/>
            <person name="Gillson C."/>
            <person name="Searle S."/>
            <person name="Zhou Y."/>
            <person name="Kokocinski F."/>
            <person name="McDonald L."/>
            <person name="Evans R."/>
            <person name="Phillips K."/>
            <person name="Atkinson A."/>
            <person name="Cooper R."/>
            <person name="Jones C."/>
            <person name="Hall R.E."/>
            <person name="Andrews T.D."/>
            <person name="Lloyd C."/>
            <person name="Ainscough R."/>
            <person name="Almeida J.P."/>
            <person name="Ambrose K.D."/>
            <person name="Anderson F."/>
            <person name="Andrew R.W."/>
            <person name="Ashwell R.I.S."/>
            <person name="Aubin K."/>
            <person name="Babbage A.K."/>
            <person name="Bagguley C.L."/>
            <person name="Bailey J."/>
            <person name="Beasley H."/>
            <person name="Bethel G."/>
            <person name="Bird C.P."/>
            <person name="Bray-Allen S."/>
            <person name="Brown J.Y."/>
            <person name="Brown A.J."/>
            <person name="Buckley D."/>
            <person name="Burton J."/>
            <person name="Bye J."/>
            <person name="Carder C."/>
            <person name="Chapman J.C."/>
            <person name="Clark S.Y."/>
            <person name="Clarke G."/>
            <person name="Clee C."/>
            <person name="Cobley V."/>
            <person name="Collier R.E."/>
            <person name="Corby N."/>
            <person name="Coville G.J."/>
            <person name="Davies J."/>
            <person name="Deadman R."/>
            <person name="Dunn M."/>
            <person name="Earthrowl M."/>
            <person name="Ellington A.G."/>
            <person name="Errington H."/>
            <person name="Frankish A."/>
            <person name="Frankland J."/>
            <person name="French L."/>
            <person name="Garner P."/>
            <person name="Garnett J."/>
            <person name="Gay L."/>
            <person name="Ghori M.R.J."/>
            <person name="Gibson R."/>
            <person name="Gilby L.M."/>
            <person name="Gillett W."/>
            <person name="Glithero R.J."/>
            <person name="Grafham D.V."/>
            <person name="Griffiths C."/>
            <person name="Griffiths-Jones S."/>
            <person name="Grocock R."/>
            <person name="Hammond S."/>
            <person name="Harrison E.S.I."/>
            <person name="Hart E."/>
            <person name="Haugen E."/>
            <person name="Heath P.D."/>
            <person name="Holmes S."/>
            <person name="Holt K."/>
            <person name="Howden P.J."/>
            <person name="Hunt A.R."/>
            <person name="Hunt S.E."/>
            <person name="Hunter G."/>
            <person name="Isherwood J."/>
            <person name="James R."/>
            <person name="Johnson C."/>
            <person name="Johnson D."/>
            <person name="Joy A."/>
            <person name="Kay M."/>
            <person name="Kershaw J.K."/>
            <person name="Kibukawa M."/>
            <person name="Kimberley A.M."/>
            <person name="King A."/>
            <person name="Knights A.J."/>
            <person name="Lad H."/>
            <person name="Laird G."/>
            <person name="Lawlor S."/>
            <person name="Leongamornlert D.A."/>
            <person name="Lloyd D.M."/>
            <person name="Loveland J."/>
            <person name="Lovell J."/>
            <person name="Lush M.J."/>
            <person name="Lyne R."/>
            <person name="Martin S."/>
            <person name="Mashreghi-Mohammadi M."/>
            <person name="Matthews L."/>
            <person name="Matthews N.S.W."/>
            <person name="McLaren S."/>
            <person name="Milne S."/>
            <person name="Mistry S."/>
            <person name="Moore M.J.F."/>
            <person name="Nickerson T."/>
            <person name="O'Dell C.N."/>
            <person name="Oliver K."/>
            <person name="Palmeiri A."/>
            <person name="Palmer S.A."/>
            <person name="Parker A."/>
            <person name="Patel D."/>
            <person name="Pearce A.V."/>
            <person name="Peck A.I."/>
            <person name="Pelan S."/>
            <person name="Phelps K."/>
            <person name="Phillimore B.J."/>
            <person name="Plumb R."/>
            <person name="Rajan J."/>
            <person name="Raymond C."/>
            <person name="Rouse G."/>
            <person name="Saenphimmachak C."/>
            <person name="Sehra H.K."/>
            <person name="Sheridan E."/>
            <person name="Shownkeen R."/>
            <person name="Sims S."/>
            <person name="Skuce C.D."/>
            <person name="Smith M."/>
            <person name="Steward C."/>
            <person name="Subramanian S."/>
            <person name="Sycamore N."/>
            <person name="Tracey A."/>
            <person name="Tromans A."/>
            <person name="Van Helmond Z."/>
            <person name="Wall M."/>
            <person name="Wallis J.M."/>
            <person name="White S."/>
            <person name="Whitehead S.L."/>
            <person name="Wilkinson J.E."/>
            <person name="Willey D.L."/>
            <person name="Williams H."/>
            <person name="Wilming L."/>
            <person name="Wray P.W."/>
            <person name="Wu Z."/>
            <person name="Coulson A."/>
            <person name="Vaudin M."/>
            <person name="Sulston J.E."/>
            <person name="Durbin R.M."/>
            <person name="Hubbard T."/>
            <person name="Wooster R."/>
            <person name="Dunham I."/>
            <person name="Carter N.P."/>
            <person name="McVean G."/>
            <person name="Ross M.T."/>
            <person name="Harrow J."/>
            <person name="Olson M.V."/>
            <person name="Beck S."/>
            <person name="Rogers J."/>
            <person name="Bentley D.R."/>
        </authorList>
    </citation>
    <scope>NUCLEOTIDE SEQUENCE [LARGE SCALE GENOMIC DNA]</scope>
</reference>
<reference key="4">
    <citation type="submission" date="2005-09" db="EMBL/GenBank/DDBJ databases">
        <authorList>
            <person name="Mural R.J."/>
            <person name="Istrail S."/>
            <person name="Sutton G.G."/>
            <person name="Florea L."/>
            <person name="Halpern A.L."/>
            <person name="Mobarry C.M."/>
            <person name="Lippert R."/>
            <person name="Walenz B."/>
            <person name="Shatkay H."/>
            <person name="Dew I."/>
            <person name="Miller J.R."/>
            <person name="Flanigan M.J."/>
            <person name="Edwards N.J."/>
            <person name="Bolanos R."/>
            <person name="Fasulo D."/>
            <person name="Halldorsson B.V."/>
            <person name="Hannenhalli S."/>
            <person name="Turner R."/>
            <person name="Yooseph S."/>
            <person name="Lu F."/>
            <person name="Nusskern D.R."/>
            <person name="Shue B.C."/>
            <person name="Zheng X.H."/>
            <person name="Zhong F."/>
            <person name="Delcher A.L."/>
            <person name="Huson D.H."/>
            <person name="Kravitz S.A."/>
            <person name="Mouchard L."/>
            <person name="Reinert K."/>
            <person name="Remington K.A."/>
            <person name="Clark A.G."/>
            <person name="Waterman M.S."/>
            <person name="Eichler E.E."/>
            <person name="Adams M.D."/>
            <person name="Hunkapiller M.W."/>
            <person name="Myers E.W."/>
            <person name="Venter J.C."/>
        </authorList>
    </citation>
    <scope>NUCLEOTIDE SEQUENCE [LARGE SCALE GENOMIC DNA]</scope>
</reference>
<reference key="5">
    <citation type="journal article" date="2004" name="Genome Res.">
        <title>The status, quality, and expansion of the NIH full-length cDNA project: the Mammalian Gene Collection (MGC).</title>
        <authorList>
            <consortium name="The MGC Project Team"/>
        </authorList>
    </citation>
    <scope>NUCLEOTIDE SEQUENCE [LARGE SCALE MRNA] (ISOFORM 4)</scope>
    <scope>NUCLEOTIDE SEQUENCE [LARGE SCALE MRNA] OF 447-1209 (ISOFORMS 1/3)</scope>
    <source>
        <tissue>Lung</tissue>
        <tissue>Mammary gland</tissue>
        <tissue>Muscle</tissue>
    </source>
</reference>
<reference key="6">
    <citation type="journal article" date="1999" name="DNA Res.">
        <title>Characterization of cDNA clones selected by the GeneMark analysis from size-fractionated cDNA libraries from human brain.</title>
        <authorList>
            <person name="Hirosawa M."/>
            <person name="Nagase T."/>
            <person name="Ishikawa K."/>
            <person name="Kikuno R."/>
            <person name="Nomura N."/>
            <person name="Ohara O."/>
        </authorList>
    </citation>
    <scope>NUCLEOTIDE SEQUENCE [LARGE SCALE MRNA] OF 277-1209 (ISOFORMS 1/3)</scope>
    <source>
        <tissue>Brain</tissue>
    </source>
</reference>
<reference key="7">
    <citation type="journal article" date="2007" name="BMC Genomics">
        <title>The full-ORF clone resource of the German cDNA consortium.</title>
        <authorList>
            <person name="Bechtel S."/>
            <person name="Rosenfelder H."/>
            <person name="Duda A."/>
            <person name="Schmidt C.P."/>
            <person name="Ernst U."/>
            <person name="Wellenreuther R."/>
            <person name="Mehrle A."/>
            <person name="Schuster C."/>
            <person name="Bahr A."/>
            <person name="Bloecker H."/>
            <person name="Heubner D."/>
            <person name="Hoerlein A."/>
            <person name="Michel G."/>
            <person name="Wedler H."/>
            <person name="Koehrer K."/>
            <person name="Ottenwaelder B."/>
            <person name="Poustka A."/>
            <person name="Wiemann S."/>
            <person name="Schupp I."/>
        </authorList>
    </citation>
    <scope>NUCLEOTIDE SEQUENCE [LARGE SCALE MRNA] OF 1112-1209 (ISOFORM 1)</scope>
    <source>
        <tissue>Testis</tissue>
    </source>
</reference>
<reference key="8">
    <citation type="journal article" date="2010" name="J. Biol. Chem.">
        <title>Heteromeric interactions required for abundance and subcellular localization of human CDC50 proteins and class 1 P4-ATPases.</title>
        <authorList>
            <person name="van der Velden L.M."/>
            <person name="Wichers C.G."/>
            <person name="van Breevoort A.E."/>
            <person name="Coleman J.A."/>
            <person name="Molday R.S."/>
            <person name="Berger R."/>
            <person name="Klomp L.W."/>
            <person name="van de Graaf S.F."/>
        </authorList>
    </citation>
    <scope>INTERACTION WITH TMEM30A</scope>
    <scope>SUBCELLULAR LOCATION</scope>
</reference>
<reference key="9">
    <citation type="journal article" date="2010" name="J. Biol. Chem.">
        <title>CDC50 proteins are critical components of the human class-1 P4-ATPase transport machinery.</title>
        <authorList>
            <person name="Bryde S."/>
            <person name="Hennrich H."/>
            <person name="Verhulst P.M."/>
            <person name="Devaux P.F."/>
            <person name="Lenoir G."/>
            <person name="Holthuis J.C."/>
        </authorList>
    </citation>
    <scope>INTERACTION WITH TMEM30A AND TMEM30B</scope>
    <scope>SUBCELLULAR LOCATION</scope>
    <scope>MUTAGENESIS OF ASP-411</scope>
</reference>
<reference key="10">
    <citation type="journal article" date="2013" name="J. Proteome Res.">
        <title>Toward a comprehensive characterization of a human cancer cell phosphoproteome.</title>
        <authorList>
            <person name="Zhou H."/>
            <person name="Di Palma S."/>
            <person name="Preisinger C."/>
            <person name="Peng M."/>
            <person name="Polat A.N."/>
            <person name="Heck A.J."/>
            <person name="Mohammed S."/>
        </authorList>
    </citation>
    <scope>PHOSPHORYLATION [LARGE SCALE ANALYSIS] AT SER-1175</scope>
    <scope>IDENTIFICATION BY MASS SPECTROMETRY [LARGE SCALE ANALYSIS]</scope>
    <source>
        <tissue>Erythroleukemia</tissue>
    </source>
</reference>
<reference key="11">
    <citation type="journal article" date="2014" name="J. Biol. Chem.">
        <title>Phospholipid flippase activities and substrate specificities of human type IV P-type ATPases localized to the plasma membrane.</title>
        <authorList>
            <person name="Takatsu H."/>
            <person name="Tanaka G."/>
            <person name="Segawa K."/>
            <person name="Suzuki J."/>
            <person name="Nagata S."/>
            <person name="Nakayama K."/>
            <person name="Shin H.W."/>
        </authorList>
    </citation>
    <scope>FUNCTION</scope>
    <scope>CATALYTIC ACTIVITY</scope>
    <scope>SUBCELLULAR LOCATION</scope>
    <scope>MUTAGENESIS OF GLU-204</scope>
</reference>
<reference key="12">
    <citation type="journal article" date="2014" name="J. Proteomics">
        <title>An enzyme assisted RP-RPLC approach for in-depth analysis of human liver phosphoproteome.</title>
        <authorList>
            <person name="Bian Y."/>
            <person name="Song C."/>
            <person name="Cheng K."/>
            <person name="Dong M."/>
            <person name="Wang F."/>
            <person name="Huang J."/>
            <person name="Sun D."/>
            <person name="Wang L."/>
            <person name="Ye M."/>
            <person name="Zou H."/>
        </authorList>
    </citation>
    <scope>IDENTIFICATION BY MASS SPECTROMETRY [LARGE SCALE ANALYSIS]</scope>
    <source>
        <tissue>Liver</tissue>
    </source>
</reference>
<sequence length="1209" mass="137440">MTVPKEMPEKWARAQAPPSWSRKKPSWGTEEERRARANDREYNEKFQYASNCIKTSKYNILTFLPVNLFEQFQEVANTYFLFLLILQLIPQISSLSWFTTIVPLVLVLTITAVKDATDDYFRHKSDNQVNNRQSQVLINGILQQEQWMNVCVGDIIKLENNQFVAADLLLLSSSEPHGLCYIETAELDGETNMKVRQAIPVTSELGDISKLAKFDGEVICEPPNNKLDKFSGTLYWKENKFPLSNQNMLLRGCVLRNTEWCFGLVIFAGPDTKLMQNSGRTKFKRTSIDRLMNTLVLWIFGFLVCMGVILAIGNAIWEHEVGMRFQVYLPWDEAVDSAFFSGFLSFWSYIIILNTVVPISLYVSVEVIRLGHSYFINWDKKMFCMKKRTPAEARTTTLNEELGQVEYIFSDKTGTLTQNIMVFNKCSINGHSYGDVFDVLGHKAELGERPEPVDFSFNPLADKKFLFWDPSLLEAVKIGDPHTHEFFRLLSLCHTVMSEEKNEGELYYKAQSPDEGALVTAARNFGFVFRSRTPKTITVHEMGTAITYQLLAILDFNNIRKRMSVIVRNPEGKIRLYCKGADTILLDRLHHSTQELLNTTMDHLNEYAGEGLRTLVLAYKDLDEEYYEEWAERRLQASLAQDSREDRLASIYEEVENNMMLLGATAIEDKLQQGVPETIALLTLANIKIWVLTGDKQETAVNIGYSCKMLTDDMTEVFIVTGHTVLEVREELRKAREKMMDSSRSVGNGFTYQDKLSSSKLTSVLEAVAGEYALVINGHSLAHALEADMELEFLETACACKAVICCRVTPLQKAQVVELVKKYKKAVTLAIGDGANDVSMIKTAHIGVGISGQEGIQAVLASDYSFSQFKFLQRLLLVHGRWSYLRMCKFLCYFFYKNFAFTMVHFWFGFFCGFSAQTVYDQYFITLYNIVYTSLPVLAMGVFDQDVPEQRSMEYPKLYEPGQLNLLFNKREFFICIAQGIYTSVLMFFIPYGVFADATRDDGTQLADYQSFAVTVATSLVIVVSVQIGLDTGYWTAINHFFIWGSLAVYFAILFAMHSNGLFDMFPNQFRFVGNAQNTLAQPTVWLTIVLTTVVCIMPVVAFRFLRLNLKPDLSDTVRYTQLVRKKQKAQHRCMRRVGRTGSRRSGYAFSHQEGFGELIMSGKNMRLSSLALSSFTTRSSSSWIESLRRKKSDSASSPSGGADKPLKG</sequence>
<gene>
    <name evidence="11" type="primary">ATP8B2</name>
    <name type="synonym">ATPID</name>
    <name type="synonym">KIAA1137</name>
</gene>
<name>AT8B2_HUMAN</name>
<proteinExistence type="evidence at protein level"/>
<evidence type="ECO:0000250" key="1">
    <source>
        <dbReference type="UniProtKB" id="P04191"/>
    </source>
</evidence>
<evidence type="ECO:0000250" key="2">
    <source>
        <dbReference type="UniProtKB" id="Q8NB49"/>
    </source>
</evidence>
<evidence type="ECO:0000250" key="3">
    <source>
        <dbReference type="UniProtKB" id="Q9HD20"/>
    </source>
</evidence>
<evidence type="ECO:0000250" key="4">
    <source>
        <dbReference type="UniProtKB" id="Q9Y2Q0"/>
    </source>
</evidence>
<evidence type="ECO:0000255" key="5"/>
<evidence type="ECO:0000256" key="6">
    <source>
        <dbReference type="SAM" id="MobiDB-lite"/>
    </source>
</evidence>
<evidence type="ECO:0000269" key="7">
    <source>
    </source>
</evidence>
<evidence type="ECO:0000269" key="8">
    <source>
    </source>
</evidence>
<evidence type="ECO:0000269" key="9">
    <source>
    </source>
</evidence>
<evidence type="ECO:0000269" key="10">
    <source>
    </source>
</evidence>
<evidence type="ECO:0000303" key="11">
    <source>
    </source>
</evidence>
<evidence type="ECO:0000303" key="12">
    <source>
    </source>
</evidence>
<evidence type="ECO:0000303" key="13">
    <source>
    </source>
</evidence>
<evidence type="ECO:0000305" key="14"/>
<evidence type="ECO:0000305" key="15">
    <source>
    </source>
</evidence>
<evidence type="ECO:0007744" key="16">
    <source>
    </source>
</evidence>
<keyword id="KW-0025">Alternative splicing</keyword>
<keyword id="KW-0067">ATP-binding</keyword>
<keyword id="KW-1003">Cell membrane</keyword>
<keyword id="KW-0256">Endoplasmic reticulum</keyword>
<keyword id="KW-0445">Lipid transport</keyword>
<keyword id="KW-0460">Magnesium</keyword>
<keyword id="KW-0472">Membrane</keyword>
<keyword id="KW-0479">Metal-binding</keyword>
<keyword id="KW-0547">Nucleotide-binding</keyword>
<keyword id="KW-0597">Phosphoprotein</keyword>
<keyword id="KW-1267">Proteomics identification</keyword>
<keyword id="KW-1185">Reference proteome</keyword>
<keyword id="KW-1278">Translocase</keyword>
<keyword id="KW-0812">Transmembrane</keyword>
<keyword id="KW-1133">Transmembrane helix</keyword>
<keyword id="KW-0813">Transport</keyword>
<accession>P98198</accession>
<accession>A0A5K1VW70</accession>
<accession>B4E3P4</accession>
<accession>Q6NT69</accession>
<accession>Q7Z486</accession>
<accession>Q96I43</accession>
<accession>Q96NQ7</accession>